<protein>
    <recommendedName>
        <fullName evidence="1">Probable tRNA sulfurtransferase</fullName>
        <ecNumber evidence="1">2.8.1.4</ecNumber>
    </recommendedName>
    <alternativeName>
        <fullName evidence="1">Sulfur carrier protein ThiS sulfurtransferase</fullName>
    </alternativeName>
    <alternativeName>
        <fullName evidence="1">Thiamine biosynthesis protein ThiI</fullName>
    </alternativeName>
    <alternativeName>
        <fullName evidence="1">tRNA 4-thiouridine synthase</fullName>
    </alternativeName>
</protein>
<organism>
    <name type="scientific">Treponema pallidum subsp. pallidum (strain SS14)</name>
    <dbReference type="NCBI Taxonomy" id="455434"/>
    <lineage>
        <taxon>Bacteria</taxon>
        <taxon>Pseudomonadati</taxon>
        <taxon>Spirochaetota</taxon>
        <taxon>Spirochaetia</taxon>
        <taxon>Spirochaetales</taxon>
        <taxon>Treponemataceae</taxon>
        <taxon>Treponema</taxon>
    </lineage>
</organism>
<keyword id="KW-0067">ATP-binding</keyword>
<keyword id="KW-0963">Cytoplasm</keyword>
<keyword id="KW-0547">Nucleotide-binding</keyword>
<keyword id="KW-0694">RNA-binding</keyword>
<keyword id="KW-0784">Thiamine biosynthesis</keyword>
<keyword id="KW-0808">Transferase</keyword>
<keyword id="KW-0820">tRNA-binding</keyword>
<reference key="1">
    <citation type="journal article" date="2008" name="BMC Microbiol.">
        <title>Complete genome sequence of Treponema pallidum ssp. pallidum strain SS14 determined with oligonucleotide arrays.</title>
        <authorList>
            <person name="Matejkova P."/>
            <person name="Strouhal M."/>
            <person name="Smajs D."/>
            <person name="Norris S.J."/>
            <person name="Palzkill T."/>
            <person name="Petrosino J.F."/>
            <person name="Sodergren E."/>
            <person name="Norton J.E."/>
            <person name="Singh J."/>
            <person name="Richmond T.A."/>
            <person name="Molla M.N."/>
            <person name="Albert T.J."/>
            <person name="Weinstock G.M."/>
        </authorList>
    </citation>
    <scope>NUCLEOTIDE SEQUENCE [LARGE SCALE GENOMIC DNA]</scope>
    <source>
        <strain>SS14</strain>
    </source>
</reference>
<comment type="function">
    <text evidence="1">Catalyzes the ATP-dependent transfer of a sulfur to tRNA to produce 4-thiouridine in position 8 of tRNAs, which functions as a near-UV photosensor. Also catalyzes the transfer of sulfur to the sulfur carrier protein ThiS, forming ThiS-thiocarboxylate. This is a step in the synthesis of thiazole, in the thiamine biosynthesis pathway. The sulfur is donated as persulfide by IscS.</text>
</comment>
<comment type="catalytic activity">
    <reaction evidence="1">
        <text>[ThiI sulfur-carrier protein]-S-sulfanyl-L-cysteine + a uridine in tRNA + 2 reduced [2Fe-2S]-[ferredoxin] + ATP + H(+) = [ThiI sulfur-carrier protein]-L-cysteine + a 4-thiouridine in tRNA + 2 oxidized [2Fe-2S]-[ferredoxin] + AMP + diphosphate</text>
        <dbReference type="Rhea" id="RHEA:24176"/>
        <dbReference type="Rhea" id="RHEA-COMP:10000"/>
        <dbReference type="Rhea" id="RHEA-COMP:10001"/>
        <dbReference type="Rhea" id="RHEA-COMP:13337"/>
        <dbReference type="Rhea" id="RHEA-COMP:13338"/>
        <dbReference type="Rhea" id="RHEA-COMP:13339"/>
        <dbReference type="Rhea" id="RHEA-COMP:13340"/>
        <dbReference type="ChEBI" id="CHEBI:15378"/>
        <dbReference type="ChEBI" id="CHEBI:29950"/>
        <dbReference type="ChEBI" id="CHEBI:30616"/>
        <dbReference type="ChEBI" id="CHEBI:33019"/>
        <dbReference type="ChEBI" id="CHEBI:33737"/>
        <dbReference type="ChEBI" id="CHEBI:33738"/>
        <dbReference type="ChEBI" id="CHEBI:61963"/>
        <dbReference type="ChEBI" id="CHEBI:65315"/>
        <dbReference type="ChEBI" id="CHEBI:136798"/>
        <dbReference type="ChEBI" id="CHEBI:456215"/>
        <dbReference type="EC" id="2.8.1.4"/>
    </reaction>
</comment>
<comment type="catalytic activity">
    <reaction evidence="1">
        <text>[ThiS sulfur-carrier protein]-C-terminal Gly-Gly-AMP + S-sulfanyl-L-cysteinyl-[cysteine desulfurase] + AH2 = [ThiS sulfur-carrier protein]-C-terminal-Gly-aminoethanethioate + L-cysteinyl-[cysteine desulfurase] + A + AMP + 2 H(+)</text>
        <dbReference type="Rhea" id="RHEA:43340"/>
        <dbReference type="Rhea" id="RHEA-COMP:12157"/>
        <dbReference type="Rhea" id="RHEA-COMP:12158"/>
        <dbReference type="Rhea" id="RHEA-COMP:12910"/>
        <dbReference type="Rhea" id="RHEA-COMP:19908"/>
        <dbReference type="ChEBI" id="CHEBI:13193"/>
        <dbReference type="ChEBI" id="CHEBI:15378"/>
        <dbReference type="ChEBI" id="CHEBI:17499"/>
        <dbReference type="ChEBI" id="CHEBI:29950"/>
        <dbReference type="ChEBI" id="CHEBI:61963"/>
        <dbReference type="ChEBI" id="CHEBI:90618"/>
        <dbReference type="ChEBI" id="CHEBI:232372"/>
        <dbReference type="ChEBI" id="CHEBI:456215"/>
    </reaction>
</comment>
<comment type="pathway">
    <text evidence="1">Cofactor biosynthesis; thiamine diphosphate biosynthesis.</text>
</comment>
<comment type="subcellular location">
    <subcellularLocation>
        <location evidence="1">Cytoplasm</location>
    </subcellularLocation>
</comment>
<comment type="similarity">
    <text evidence="1">Belongs to the ThiI family.</text>
</comment>
<sequence length="401" mass="44606">MVNGSTQYLAHVGELSLKKGNRRQFEVQLERNLTLMLRSINPHVTVRAGRLYLSVPASFEAQTTAEQALSCLLGITGWAAATACPKTMEAITRCAHAEATLAAREGKRTFRIEARRADKRFCRTSSEIAREVGAVIHQSGALSVDLHYPDVVIFIEVREREAFLYGARRRGLRGLPCGVSGRGLLLLSGGIDSPVAGYRMLSRGMHIDCLYFHSYPYTPPEAQKKVEDLAKVLARYGLSTTLTVVSLTDIQKQLQTHAPAPSLTLLLRMCMMRIAEHVAREQRARCLITGESLAQVASQTLENLTVTSACTHLPIFRPLIGADKEDIIRTATEIGTYAISIRPYEDCCTLFAPKHPVLRPEVEEMQKQYQSLMLGPLLEDAFRTRKRTRIYGNYGVQESGE</sequence>
<proteinExistence type="inferred from homology"/>
<name>THII_TREPS</name>
<gene>
    <name evidence="1" type="primary">thiI</name>
    <name type="ordered locus">TPASS_0559</name>
</gene>
<evidence type="ECO:0000255" key="1">
    <source>
        <dbReference type="HAMAP-Rule" id="MF_00021"/>
    </source>
</evidence>
<feature type="chain" id="PRO_1000090043" description="Probable tRNA sulfurtransferase">
    <location>
        <begin position="1"/>
        <end position="401"/>
    </location>
</feature>
<feature type="domain" description="THUMP" evidence="1">
    <location>
        <begin position="63"/>
        <end position="168"/>
    </location>
</feature>
<feature type="binding site" evidence="1">
    <location>
        <begin position="186"/>
        <end position="187"/>
    </location>
    <ligand>
        <name>ATP</name>
        <dbReference type="ChEBI" id="CHEBI:30616"/>
    </ligand>
</feature>
<feature type="binding site" evidence="1">
    <location>
        <begin position="211"/>
        <end position="212"/>
    </location>
    <ligand>
        <name>ATP</name>
        <dbReference type="ChEBI" id="CHEBI:30616"/>
    </ligand>
</feature>
<feature type="binding site" evidence="1">
    <location>
        <position position="268"/>
    </location>
    <ligand>
        <name>ATP</name>
        <dbReference type="ChEBI" id="CHEBI:30616"/>
    </ligand>
</feature>
<feature type="binding site" evidence="1">
    <location>
        <position position="290"/>
    </location>
    <ligand>
        <name>ATP</name>
        <dbReference type="ChEBI" id="CHEBI:30616"/>
    </ligand>
</feature>
<feature type="binding site" evidence="1">
    <location>
        <position position="299"/>
    </location>
    <ligand>
        <name>ATP</name>
        <dbReference type="ChEBI" id="CHEBI:30616"/>
    </ligand>
</feature>
<accession>B2S3F1</accession>
<dbReference type="EC" id="2.8.1.4" evidence="1"/>
<dbReference type="EMBL" id="CP000805">
    <property type="protein sequence ID" value="ACD70980.1"/>
    <property type="molecule type" value="Genomic_DNA"/>
</dbReference>
<dbReference type="RefSeq" id="WP_012460570.1">
    <property type="nucleotide sequence ID" value="NC_021508.1"/>
</dbReference>
<dbReference type="SMR" id="B2S3F1"/>
<dbReference type="KEGG" id="tpp:TPASS_0559"/>
<dbReference type="PATRIC" id="fig|455434.6.peg.558"/>
<dbReference type="UniPathway" id="UPA00060"/>
<dbReference type="Proteomes" id="UP000001202">
    <property type="component" value="Chromosome"/>
</dbReference>
<dbReference type="GO" id="GO:0005829">
    <property type="term" value="C:cytosol"/>
    <property type="evidence" value="ECO:0007669"/>
    <property type="project" value="TreeGrafter"/>
</dbReference>
<dbReference type="GO" id="GO:0005524">
    <property type="term" value="F:ATP binding"/>
    <property type="evidence" value="ECO:0007669"/>
    <property type="project" value="UniProtKB-UniRule"/>
</dbReference>
<dbReference type="GO" id="GO:0004810">
    <property type="term" value="F:CCA tRNA nucleotidyltransferase activity"/>
    <property type="evidence" value="ECO:0007669"/>
    <property type="project" value="InterPro"/>
</dbReference>
<dbReference type="GO" id="GO:0000049">
    <property type="term" value="F:tRNA binding"/>
    <property type="evidence" value="ECO:0007669"/>
    <property type="project" value="UniProtKB-UniRule"/>
</dbReference>
<dbReference type="GO" id="GO:0140741">
    <property type="term" value="F:tRNA-uracil-4 sulfurtransferase activity"/>
    <property type="evidence" value="ECO:0007669"/>
    <property type="project" value="UniProtKB-EC"/>
</dbReference>
<dbReference type="GO" id="GO:0009228">
    <property type="term" value="P:thiamine biosynthetic process"/>
    <property type="evidence" value="ECO:0007669"/>
    <property type="project" value="UniProtKB-KW"/>
</dbReference>
<dbReference type="GO" id="GO:0009229">
    <property type="term" value="P:thiamine diphosphate biosynthetic process"/>
    <property type="evidence" value="ECO:0007669"/>
    <property type="project" value="UniProtKB-UniRule"/>
</dbReference>
<dbReference type="GO" id="GO:0052837">
    <property type="term" value="P:thiazole biosynthetic process"/>
    <property type="evidence" value="ECO:0007669"/>
    <property type="project" value="TreeGrafter"/>
</dbReference>
<dbReference type="GO" id="GO:0002937">
    <property type="term" value="P:tRNA 4-thiouridine biosynthesis"/>
    <property type="evidence" value="ECO:0007669"/>
    <property type="project" value="TreeGrafter"/>
</dbReference>
<dbReference type="CDD" id="cd01712">
    <property type="entry name" value="PPase_ThiI"/>
    <property type="match status" value="1"/>
</dbReference>
<dbReference type="CDD" id="cd11716">
    <property type="entry name" value="THUMP_ThiI"/>
    <property type="match status" value="1"/>
</dbReference>
<dbReference type="FunFam" id="3.40.50.620:FF:000053">
    <property type="entry name" value="Probable tRNA sulfurtransferase"/>
    <property type="match status" value="1"/>
</dbReference>
<dbReference type="Gene3D" id="3.30.2130.30">
    <property type="match status" value="1"/>
</dbReference>
<dbReference type="Gene3D" id="3.40.50.620">
    <property type="entry name" value="HUPs"/>
    <property type="match status" value="1"/>
</dbReference>
<dbReference type="HAMAP" id="MF_00021">
    <property type="entry name" value="ThiI"/>
    <property type="match status" value="1"/>
</dbReference>
<dbReference type="InterPro" id="IPR014729">
    <property type="entry name" value="Rossmann-like_a/b/a_fold"/>
</dbReference>
<dbReference type="InterPro" id="IPR020536">
    <property type="entry name" value="ThiI_AANH"/>
</dbReference>
<dbReference type="InterPro" id="IPR054173">
    <property type="entry name" value="ThiI_fer"/>
</dbReference>
<dbReference type="InterPro" id="IPR049961">
    <property type="entry name" value="ThiI_N"/>
</dbReference>
<dbReference type="InterPro" id="IPR004114">
    <property type="entry name" value="THUMP_dom"/>
</dbReference>
<dbReference type="InterPro" id="IPR049962">
    <property type="entry name" value="THUMP_ThiI"/>
</dbReference>
<dbReference type="InterPro" id="IPR003720">
    <property type="entry name" value="tRNA_STrfase"/>
</dbReference>
<dbReference type="InterPro" id="IPR050102">
    <property type="entry name" value="tRNA_sulfurtransferase_ThiI"/>
</dbReference>
<dbReference type="NCBIfam" id="TIGR00342">
    <property type="entry name" value="tRNA uracil 4-sulfurtransferase ThiI"/>
    <property type="match status" value="1"/>
</dbReference>
<dbReference type="PANTHER" id="PTHR43209">
    <property type="entry name" value="TRNA SULFURTRANSFERASE"/>
    <property type="match status" value="1"/>
</dbReference>
<dbReference type="PANTHER" id="PTHR43209:SF1">
    <property type="entry name" value="TRNA SULFURTRANSFERASE"/>
    <property type="match status" value="1"/>
</dbReference>
<dbReference type="Pfam" id="PF02568">
    <property type="entry name" value="ThiI"/>
    <property type="match status" value="1"/>
</dbReference>
<dbReference type="Pfam" id="PF22025">
    <property type="entry name" value="ThiI_fer"/>
    <property type="match status" value="1"/>
</dbReference>
<dbReference type="Pfam" id="PF02926">
    <property type="entry name" value="THUMP"/>
    <property type="match status" value="1"/>
</dbReference>
<dbReference type="SMART" id="SM00981">
    <property type="entry name" value="THUMP"/>
    <property type="match status" value="1"/>
</dbReference>
<dbReference type="SUPFAM" id="SSF52402">
    <property type="entry name" value="Adenine nucleotide alpha hydrolases-like"/>
    <property type="match status" value="1"/>
</dbReference>
<dbReference type="SUPFAM" id="SSF143437">
    <property type="entry name" value="THUMP domain-like"/>
    <property type="match status" value="1"/>
</dbReference>
<dbReference type="PROSITE" id="PS51165">
    <property type="entry name" value="THUMP"/>
    <property type="match status" value="1"/>
</dbReference>